<protein>
    <recommendedName>
        <fullName evidence="1">Coenzyme F420:L-glutamate ligase</fullName>
        <ecNumber evidence="1">6.3.2.31</ecNumber>
        <ecNumber evidence="1">6.3.2.34</ecNumber>
    </recommendedName>
    <alternativeName>
        <fullName evidence="1">Coenzyme F420-0:L-glutamate ligase</fullName>
    </alternativeName>
    <alternativeName>
        <fullName evidence="1">Coenzyme F420-1:gamma-L-glutamate ligase</fullName>
    </alternativeName>
</protein>
<sequence length="252" mass="26538">MGISLIGVEGMPLVGAGDDIAYLIISALNEGGEDLLDGDIIVIAETIVSKAEGNIISLEEIKPSPEALDIAERTGKDPSLVEAILGESSEIIRVGHDFIVSETRHGFVCANAGIDESNVDDGLATPLPRDPDGSAEKILRTLQEATGRELAVIISDTQGRPFREGAVGVAVGVAGLSPIWDRKGERDLYGRSLETTRVAVADELAAAASLVMGQADEGVPAVIIRGYPWGHLRSDGGVKPLLRPRELDVFRG</sequence>
<comment type="function">
    <text evidence="1">Catalyzes the GTP-dependent successive addition of two or more gamma-linked L-glutamates to the L-lactyl phosphodiester of 7,8-didemethyl-8-hydroxy-5-deazariboflavin (F420-0) to form coenzyme F420-0-glutamyl-glutamate (F420-2) or polyglutamated F420 derivatives.</text>
</comment>
<comment type="catalytic activity">
    <reaction evidence="1">
        <text>oxidized coenzyme F420-0 + GTP + L-glutamate = oxidized coenzyme F420-1 + GDP + phosphate + H(+)</text>
        <dbReference type="Rhea" id="RHEA:30555"/>
        <dbReference type="ChEBI" id="CHEBI:15378"/>
        <dbReference type="ChEBI" id="CHEBI:29985"/>
        <dbReference type="ChEBI" id="CHEBI:37565"/>
        <dbReference type="ChEBI" id="CHEBI:43474"/>
        <dbReference type="ChEBI" id="CHEBI:58189"/>
        <dbReference type="ChEBI" id="CHEBI:59907"/>
        <dbReference type="ChEBI" id="CHEBI:59920"/>
        <dbReference type="EC" id="6.3.2.31"/>
    </reaction>
</comment>
<comment type="catalytic activity">
    <reaction evidence="1">
        <text>oxidized coenzyme F420-1 + GTP + L-glutamate = oxidized coenzyme F420-2 + GDP + phosphate + H(+)</text>
        <dbReference type="Rhea" id="RHEA:30523"/>
        <dbReference type="ChEBI" id="CHEBI:15378"/>
        <dbReference type="ChEBI" id="CHEBI:29985"/>
        <dbReference type="ChEBI" id="CHEBI:37565"/>
        <dbReference type="ChEBI" id="CHEBI:43474"/>
        <dbReference type="ChEBI" id="CHEBI:57922"/>
        <dbReference type="ChEBI" id="CHEBI:58189"/>
        <dbReference type="ChEBI" id="CHEBI:59920"/>
        <dbReference type="EC" id="6.3.2.34"/>
    </reaction>
</comment>
<comment type="cofactor">
    <cofactor evidence="1">
        <name>Mg(2+)</name>
        <dbReference type="ChEBI" id="CHEBI:18420"/>
    </cofactor>
    <cofactor evidence="1">
        <name>Mn(2+)</name>
        <dbReference type="ChEBI" id="CHEBI:29035"/>
    </cofactor>
    <text evidence="1">Binds 2 divalent metal cations per subunit. The ions could be magnesium and/or manganese.</text>
</comment>
<comment type="cofactor">
    <cofactor evidence="1">
        <name>K(+)</name>
        <dbReference type="ChEBI" id="CHEBI:29103"/>
    </cofactor>
    <text evidence="1">Monovalent cation. The ion could be potassium.</text>
</comment>
<comment type="pathway">
    <text evidence="1">Cofactor biosynthesis; coenzyme F420 biosynthesis.</text>
</comment>
<comment type="subunit">
    <text evidence="1">Homodimer.</text>
</comment>
<comment type="similarity">
    <text evidence="1">Belongs to the CofE family.</text>
</comment>
<dbReference type="EC" id="6.3.2.31" evidence="1"/>
<dbReference type="EC" id="6.3.2.34" evidence="1"/>
<dbReference type="EMBL" id="AE000666">
    <property type="protein sequence ID" value="AAB85515.1"/>
    <property type="molecule type" value="Genomic_DNA"/>
</dbReference>
<dbReference type="PIR" id="H69002">
    <property type="entry name" value="H69002"/>
</dbReference>
<dbReference type="RefSeq" id="WP_010876650.1">
    <property type="nucleotide sequence ID" value="NC_000916.1"/>
</dbReference>
<dbReference type="SMR" id="O27098"/>
<dbReference type="FunCoup" id="O27098">
    <property type="interactions" value="90"/>
</dbReference>
<dbReference type="STRING" id="187420.MTH_1019"/>
<dbReference type="PaxDb" id="187420-MTH_1019"/>
<dbReference type="EnsemblBacteria" id="AAB85515">
    <property type="protein sequence ID" value="AAB85515"/>
    <property type="gene ID" value="MTH_1019"/>
</dbReference>
<dbReference type="GeneID" id="1471427"/>
<dbReference type="GeneID" id="77401550"/>
<dbReference type="KEGG" id="mth:MTH_1019"/>
<dbReference type="PATRIC" id="fig|187420.15.peg.1002"/>
<dbReference type="HOGENOM" id="CLU_051152_1_1_2"/>
<dbReference type="InParanoid" id="O27098"/>
<dbReference type="UniPathway" id="UPA00071"/>
<dbReference type="Proteomes" id="UP000005223">
    <property type="component" value="Chromosome"/>
</dbReference>
<dbReference type="GO" id="GO:0052618">
    <property type="term" value="F:coenzyme F420-0:L-glutamate ligase activity"/>
    <property type="evidence" value="ECO:0007669"/>
    <property type="project" value="UniProtKB-UniRule"/>
</dbReference>
<dbReference type="GO" id="GO:0052619">
    <property type="term" value="F:coenzyme F420-1:gamma-L-glutamate ligase activity"/>
    <property type="evidence" value="ECO:0007669"/>
    <property type="project" value="UniProtKB-UniRule"/>
</dbReference>
<dbReference type="GO" id="GO:0005525">
    <property type="term" value="F:GTP binding"/>
    <property type="evidence" value="ECO:0007669"/>
    <property type="project" value="UniProtKB-KW"/>
</dbReference>
<dbReference type="GO" id="GO:0046872">
    <property type="term" value="F:metal ion binding"/>
    <property type="evidence" value="ECO:0007669"/>
    <property type="project" value="UniProtKB-KW"/>
</dbReference>
<dbReference type="GO" id="GO:0052645">
    <property type="term" value="P:F420-0 metabolic process"/>
    <property type="evidence" value="ECO:0007669"/>
    <property type="project" value="UniProtKB-UniRule"/>
</dbReference>
<dbReference type="Gene3D" id="3.30.1330.100">
    <property type="entry name" value="CofE-like"/>
    <property type="match status" value="1"/>
</dbReference>
<dbReference type="Gene3D" id="3.90.1660.10">
    <property type="entry name" value="CofE-like domain"/>
    <property type="match status" value="1"/>
</dbReference>
<dbReference type="HAMAP" id="MF_01258">
    <property type="entry name" value="F420_ligase_CofE"/>
    <property type="match status" value="1"/>
</dbReference>
<dbReference type="InterPro" id="IPR008225">
    <property type="entry name" value="F420-0_g-glutamyl_ligase"/>
</dbReference>
<dbReference type="InterPro" id="IPR002847">
    <property type="entry name" value="F420-0_gamma-glut_ligase-dom"/>
</dbReference>
<dbReference type="InterPro" id="IPR023659">
    <property type="entry name" value="F420_ligase_CofE_arc"/>
</dbReference>
<dbReference type="NCBIfam" id="TIGR01916">
    <property type="entry name" value="F420_cofE"/>
    <property type="match status" value="1"/>
</dbReference>
<dbReference type="NCBIfam" id="NF009809">
    <property type="entry name" value="PRK13293.1"/>
    <property type="match status" value="1"/>
</dbReference>
<dbReference type="PANTHER" id="PTHR47917">
    <property type="match status" value="1"/>
</dbReference>
<dbReference type="PANTHER" id="PTHR47917:SF1">
    <property type="entry name" value="COENZYME F420:L-GLUTAMATE LIGASE"/>
    <property type="match status" value="1"/>
</dbReference>
<dbReference type="Pfam" id="PF01996">
    <property type="entry name" value="F420_ligase"/>
    <property type="match status" value="1"/>
</dbReference>
<dbReference type="SUPFAM" id="SSF144010">
    <property type="entry name" value="CofE-like"/>
    <property type="match status" value="1"/>
</dbReference>
<gene>
    <name evidence="1" type="primary">cofE</name>
    <name type="ordered locus">MTH_1019</name>
</gene>
<accession>O27098</accession>
<evidence type="ECO:0000255" key="1">
    <source>
        <dbReference type="HAMAP-Rule" id="MF_01258"/>
    </source>
</evidence>
<reference key="1">
    <citation type="journal article" date="1997" name="J. Bacteriol.">
        <title>Complete genome sequence of Methanobacterium thermoautotrophicum deltaH: functional analysis and comparative genomics.</title>
        <authorList>
            <person name="Smith D.R."/>
            <person name="Doucette-Stamm L.A."/>
            <person name="Deloughery C."/>
            <person name="Lee H.-M."/>
            <person name="Dubois J."/>
            <person name="Aldredge T."/>
            <person name="Bashirzadeh R."/>
            <person name="Blakely D."/>
            <person name="Cook R."/>
            <person name="Gilbert K."/>
            <person name="Harrison D."/>
            <person name="Hoang L."/>
            <person name="Keagle P."/>
            <person name="Lumm W."/>
            <person name="Pothier B."/>
            <person name="Qiu D."/>
            <person name="Spadafora R."/>
            <person name="Vicare R."/>
            <person name="Wang Y."/>
            <person name="Wierzbowski J."/>
            <person name="Gibson R."/>
            <person name="Jiwani N."/>
            <person name="Caruso A."/>
            <person name="Bush D."/>
            <person name="Safer H."/>
            <person name="Patwell D."/>
            <person name="Prabhakar S."/>
            <person name="McDougall S."/>
            <person name="Shimer G."/>
            <person name="Goyal A."/>
            <person name="Pietrovski S."/>
            <person name="Church G.M."/>
            <person name="Daniels C.J."/>
            <person name="Mao J.-I."/>
            <person name="Rice P."/>
            <person name="Noelling J."/>
            <person name="Reeve J.N."/>
        </authorList>
    </citation>
    <scope>NUCLEOTIDE SEQUENCE [LARGE SCALE GENOMIC DNA]</scope>
    <source>
        <strain>ATCC 29096 / DSM 1053 / JCM 10044 / NBRC 100330 / Delta H</strain>
    </source>
</reference>
<proteinExistence type="inferred from homology"/>
<feature type="chain" id="PRO_0000145793" description="Coenzyme F420:L-glutamate ligase">
    <location>
        <begin position="1"/>
        <end position="252"/>
    </location>
</feature>
<feature type="binding site" evidence="1">
    <location>
        <begin position="11"/>
        <end position="14"/>
    </location>
    <ligand>
        <name>GTP</name>
        <dbReference type="ChEBI" id="CHEBI:37565"/>
    </ligand>
</feature>
<feature type="binding site" evidence="1">
    <location>
        <begin position="45"/>
        <end position="46"/>
    </location>
    <ligand>
        <name>GTP</name>
        <dbReference type="ChEBI" id="CHEBI:37565"/>
    </ligand>
</feature>
<feature type="binding site" evidence="1">
    <location>
        <position position="50"/>
    </location>
    <ligand>
        <name>GTP</name>
        <dbReference type="ChEBI" id="CHEBI:37565"/>
    </ligand>
</feature>
<feature type="binding site" evidence="1">
    <location>
        <position position="115"/>
    </location>
    <ligand>
        <name>a divalent metal cation</name>
        <dbReference type="ChEBI" id="CHEBI:60240"/>
        <label>1</label>
    </ligand>
</feature>
<feature type="binding site" evidence="1">
    <location>
        <position position="118"/>
    </location>
    <ligand>
        <name>GTP</name>
        <dbReference type="ChEBI" id="CHEBI:37565"/>
    </ligand>
</feature>
<feature type="binding site" evidence="1">
    <location>
        <position position="156"/>
    </location>
    <ligand>
        <name>a divalent metal cation</name>
        <dbReference type="ChEBI" id="CHEBI:60240"/>
        <label>1</label>
    </ligand>
</feature>
<feature type="binding site" evidence="1">
    <location>
        <position position="157"/>
    </location>
    <ligand>
        <name>a divalent metal cation</name>
        <dbReference type="ChEBI" id="CHEBI:60240"/>
        <label>2</label>
    </ligand>
</feature>
<feature type="binding site" evidence="1">
    <location>
        <begin position="212"/>
        <end position="219"/>
    </location>
    <ligand>
        <name>GTP</name>
        <dbReference type="ChEBI" id="CHEBI:37565"/>
    </ligand>
</feature>
<feature type="binding site" evidence="1">
    <location>
        <position position="214"/>
    </location>
    <ligand>
        <name>a divalent metal cation</name>
        <dbReference type="ChEBI" id="CHEBI:60240"/>
        <label>2</label>
    </ligand>
</feature>
<name>COFE_METTH</name>
<organism>
    <name type="scientific">Methanothermobacter thermautotrophicus (strain ATCC 29096 / DSM 1053 / JCM 10044 / NBRC 100330 / Delta H)</name>
    <name type="common">Methanobacterium thermoautotrophicum</name>
    <dbReference type="NCBI Taxonomy" id="187420"/>
    <lineage>
        <taxon>Archaea</taxon>
        <taxon>Methanobacteriati</taxon>
        <taxon>Methanobacteriota</taxon>
        <taxon>Methanomada group</taxon>
        <taxon>Methanobacteria</taxon>
        <taxon>Methanobacteriales</taxon>
        <taxon>Methanobacteriaceae</taxon>
        <taxon>Methanothermobacter</taxon>
    </lineage>
</organism>
<keyword id="KW-0342">GTP-binding</keyword>
<keyword id="KW-0436">Ligase</keyword>
<keyword id="KW-0460">Magnesium</keyword>
<keyword id="KW-0464">Manganese</keyword>
<keyword id="KW-0479">Metal-binding</keyword>
<keyword id="KW-0547">Nucleotide-binding</keyword>
<keyword id="KW-0630">Potassium</keyword>
<keyword id="KW-1185">Reference proteome</keyword>